<comment type="function">
    <text evidence="1">May be required for ribosome biogenesis.</text>
</comment>
<comment type="subunit">
    <text evidence="8">Interacts with DHX37.</text>
</comment>
<comment type="interaction">
    <interactant intactId="EBI-473284">
        <id>Q9BVJ6</id>
    </interactant>
    <interactant intactId="EBI-640741">
        <id>P01023</id>
        <label>A2M</label>
    </interactant>
    <organismsDiffer>false</organismsDiffer>
    <experiments>3</experiments>
</comment>
<comment type="interaction">
    <interactant intactId="EBI-473284">
        <id>Q9BVJ6</id>
    </interactant>
    <interactant intactId="EBI-25646567">
        <id>Q06481-5</id>
        <label>APLP2</label>
    </interactant>
    <organismsDiffer>false</organismsDiffer>
    <experiments>3</experiments>
</comment>
<comment type="interaction">
    <interactant intactId="EBI-473284">
        <id>Q9BVJ6</id>
    </interactant>
    <interactant intactId="EBI-77613">
        <id>P05067</id>
        <label>APP</label>
    </interactant>
    <organismsDiffer>false</organismsDiffer>
    <experiments>3</experiments>
</comment>
<comment type="interaction">
    <interactant intactId="EBI-473284">
        <id>Q9BVJ6</id>
    </interactant>
    <interactant intactId="EBI-702390">
        <id>Q9UBB4</id>
        <label>ATXN10</label>
    </interactant>
    <organismsDiffer>false</organismsDiffer>
    <experiments>3</experiments>
</comment>
<comment type="interaction">
    <interactant intactId="EBI-473284">
        <id>Q9BVJ6</id>
    </interactant>
    <interactant intactId="EBI-718504">
        <id>Q13867</id>
        <label>BLMH</label>
    </interactant>
    <organismsDiffer>false</organismsDiffer>
    <experiments>3</experiments>
</comment>
<comment type="interaction">
    <interactant intactId="EBI-473284">
        <id>Q9BVJ6</id>
    </interactant>
    <interactant intactId="EBI-1383687">
        <id>Q9UQM7</id>
        <label>CAMK2A</label>
    </interactant>
    <organismsDiffer>false</organismsDiffer>
    <experiments>3</experiments>
</comment>
<comment type="interaction">
    <interactant intactId="EBI-473284">
        <id>Q9BVJ6</id>
    </interactant>
    <interactant intactId="EBI-9087876">
        <id>P48730-2</id>
        <label>CSNK1D</label>
    </interactant>
    <organismsDiffer>false</organismsDiffer>
    <experiments>3</experiments>
</comment>
<comment type="interaction">
    <interactant intactId="EBI-473284">
        <id>Q9BVJ6</id>
    </interactant>
    <interactant intactId="EBI-25840445">
        <id>O14576-2</id>
        <label>DYNC1I1</label>
    </interactant>
    <organismsDiffer>false</organismsDiffer>
    <experiments>3</experiments>
</comment>
<comment type="interaction">
    <interactant intactId="EBI-473284">
        <id>Q9BVJ6</id>
    </interactant>
    <interactant intactId="EBI-448202">
        <id>O95257</id>
        <label>GADD45G</label>
    </interactant>
    <organismsDiffer>false</organismsDiffer>
    <experiments>3</experiments>
</comment>
<comment type="interaction">
    <interactant intactId="EBI-473284">
        <id>Q9BVJ6</id>
    </interactant>
    <interactant intactId="EBI-466029">
        <id>P42858</id>
        <label>HTT</label>
    </interactant>
    <organismsDiffer>false</organismsDiffer>
    <experiments>4</experiments>
</comment>
<comment type="interaction">
    <interactant intactId="EBI-473284">
        <id>Q9BVJ6</id>
    </interactant>
    <interactant intactId="EBI-1055254">
        <id>Q8WXH2</id>
        <label>JPH3</label>
    </interactant>
    <organismsDiffer>false</organismsDiffer>
    <experiments>3</experiments>
</comment>
<comment type="interaction">
    <interactant intactId="EBI-473284">
        <id>Q9BVJ6</id>
    </interactant>
    <interactant intactId="EBI-740738">
        <id>O95751</id>
        <label>LDOC1</label>
    </interactant>
    <organismsDiffer>false</organismsDiffer>
    <experiments>3</experiments>
</comment>
<comment type="interaction">
    <interactant intactId="EBI-473284">
        <id>Q9BVJ6</id>
    </interactant>
    <interactant intactId="EBI-8639312">
        <id>P25800</id>
        <label>LMO1</label>
    </interactant>
    <organismsDiffer>false</organismsDiffer>
    <experiments>3</experiments>
</comment>
<comment type="interaction">
    <interactant intactId="EBI-473284">
        <id>Q9BVJ6</id>
    </interactant>
    <interactant intactId="EBI-413628">
        <id>P63000</id>
        <label>RAC1</label>
    </interactant>
    <organismsDiffer>false</organismsDiffer>
    <experiments>3</experiments>
</comment>
<comment type="interaction">
    <interactant intactId="EBI-473284">
        <id>Q9BVJ6</id>
    </interactant>
    <interactant intactId="EBI-8463848">
        <id>Q8NB12</id>
        <label>SMYD1</label>
    </interactant>
    <organismsDiffer>false</organismsDiffer>
    <experiments>4</experiments>
</comment>
<comment type="interaction">
    <interactant intactId="EBI-473284">
        <id>Q9BVJ6</id>
    </interactant>
    <interactant intactId="EBI-6116822">
        <id>Q8N3L3</id>
        <label>TXLNB</label>
    </interactant>
    <organismsDiffer>false</organismsDiffer>
    <experiments>3</experiments>
</comment>
<comment type="subcellular location">
    <subcellularLocation>
        <location evidence="4">Nucleus</location>
        <location evidence="4">Nucleolus</location>
    </subcellularLocation>
</comment>
<comment type="alternative products">
    <event type="alternative splicing"/>
    <isoform>
        <id>Q9BVJ6-1</id>
        <name>1</name>
        <sequence type="displayed"/>
    </isoform>
    <isoform>
        <id>Q9BVJ6-2</id>
        <name>2</name>
        <sequence type="described" ref="VSP_014475 VSP_014476"/>
    </isoform>
    <isoform>
        <id>Q9BVJ6-3</id>
        <name>3</name>
        <sequence type="described" ref="VSP_046389"/>
    </isoform>
</comment>
<comment type="tissue specificity">
    <text evidence="6">Ubiquitously expressed.</text>
</comment>
<comment type="PTM">
    <text evidence="1">Citrullinated by PADI4.</text>
</comment>
<comment type="miscellaneous">
    <text>The human genome also contains the UTP14C gene, an autosomal retrotransposed copy of this X-linked gene. Evolution of autosomal retrogenes from X-linked progenitors compensates for X-chromosome silencing during male meiosis.</text>
</comment>
<comment type="similarity">
    <text evidence="10">Belongs to the UTP14 family.</text>
</comment>
<keyword id="KW-0002">3D-structure</keyword>
<keyword id="KW-0025">Alternative splicing</keyword>
<keyword id="KW-0164">Citrullination</keyword>
<keyword id="KW-0175">Coiled coil</keyword>
<keyword id="KW-1017">Isopeptide bond</keyword>
<keyword id="KW-0539">Nucleus</keyword>
<keyword id="KW-0597">Phosphoprotein</keyword>
<keyword id="KW-1267">Proteomics identification</keyword>
<keyword id="KW-1185">Reference proteome</keyword>
<keyword id="KW-0690">Ribosome biogenesis</keyword>
<keyword id="KW-0832">Ubl conjugation</keyword>
<organism>
    <name type="scientific">Homo sapiens</name>
    <name type="common">Human</name>
    <dbReference type="NCBI Taxonomy" id="9606"/>
    <lineage>
        <taxon>Eukaryota</taxon>
        <taxon>Metazoa</taxon>
        <taxon>Chordata</taxon>
        <taxon>Craniata</taxon>
        <taxon>Vertebrata</taxon>
        <taxon>Euteleostomi</taxon>
        <taxon>Mammalia</taxon>
        <taxon>Eutheria</taxon>
        <taxon>Euarchontoglires</taxon>
        <taxon>Primates</taxon>
        <taxon>Haplorrhini</taxon>
        <taxon>Catarrhini</taxon>
        <taxon>Hominidae</taxon>
        <taxon>Homo</taxon>
    </lineage>
</organism>
<feature type="chain" id="PRO_0000065733" description="U3 small nucleolar RNA-associated protein 14 homolog A">
    <location>
        <begin position="1"/>
        <end position="771"/>
    </location>
</feature>
<feature type="region of interest" description="Disordered" evidence="3">
    <location>
        <begin position="23"/>
        <end position="49"/>
    </location>
</feature>
<feature type="region of interest" description="Disordered" evidence="3">
    <location>
        <begin position="334"/>
        <end position="355"/>
    </location>
</feature>
<feature type="region of interest" description="Disordered" evidence="3">
    <location>
        <begin position="367"/>
        <end position="557"/>
    </location>
</feature>
<feature type="region of interest" description="Disordered" evidence="3">
    <location>
        <begin position="740"/>
        <end position="771"/>
    </location>
</feature>
<feature type="coiled-coil region" evidence="2">
    <location>
        <begin position="40"/>
        <end position="67"/>
    </location>
</feature>
<feature type="coiled-coil region" evidence="2">
    <location>
        <begin position="216"/>
        <end position="290"/>
    </location>
</feature>
<feature type="coiled-coil region" evidence="2">
    <location>
        <begin position="317"/>
        <end position="347"/>
    </location>
</feature>
<feature type="compositionally biased region" description="Acidic residues" evidence="3">
    <location>
        <begin position="342"/>
        <end position="355"/>
    </location>
</feature>
<feature type="compositionally biased region" description="Basic and acidic residues" evidence="3">
    <location>
        <begin position="399"/>
        <end position="436"/>
    </location>
</feature>
<feature type="compositionally biased region" description="Basic and acidic residues" evidence="3">
    <location>
        <begin position="504"/>
        <end position="529"/>
    </location>
</feature>
<feature type="compositionally biased region" description="Polar residues" evidence="3">
    <location>
        <begin position="535"/>
        <end position="544"/>
    </location>
</feature>
<feature type="compositionally biased region" description="Basic and acidic residues" evidence="3">
    <location>
        <begin position="547"/>
        <end position="557"/>
    </location>
</feature>
<feature type="compositionally biased region" description="Polar residues" evidence="3">
    <location>
        <begin position="740"/>
        <end position="751"/>
    </location>
</feature>
<feature type="compositionally biased region" description="Basic residues" evidence="3">
    <location>
        <begin position="753"/>
        <end position="771"/>
    </location>
</feature>
<feature type="modified residue" description="Phosphoserine" evidence="13 14 17 18">
    <location>
        <position position="29"/>
    </location>
</feature>
<feature type="modified residue" description="Phosphoserine" evidence="13 14 17 18">
    <location>
        <position position="31"/>
    </location>
</feature>
<feature type="modified residue" description="Phosphoserine" evidence="13 15 17">
    <location>
        <position position="52"/>
    </location>
</feature>
<feature type="modified residue" description="Phosphoserine" evidence="13 17">
    <location>
        <position position="77"/>
    </location>
</feature>
<feature type="modified residue" description="Phosphoserine" evidence="17">
    <location>
        <position position="81"/>
    </location>
</feature>
<feature type="modified residue" description="Phosphothreonine" evidence="15">
    <location>
        <position position="205"/>
    </location>
</feature>
<feature type="modified residue" description="Phosphoserine" evidence="13 16">
    <location>
        <position position="405"/>
    </location>
</feature>
<feature type="modified residue" description="Phosphoserine" evidence="13 16">
    <location>
        <position position="407"/>
    </location>
</feature>
<feature type="modified residue" description="Citrulline" evidence="1">
    <location>
        <position position="433"/>
    </location>
</feature>
<feature type="modified residue" description="Phosphoserine" evidence="12 14 16 17">
    <location>
        <position position="437"/>
    </location>
</feature>
<feature type="modified residue" description="Phosphoserine" evidence="11 13 15 16 17">
    <location>
        <position position="445"/>
    </location>
</feature>
<feature type="modified residue" description="Phosphoserine" evidence="15 16 17">
    <location>
        <position position="453"/>
    </location>
</feature>
<feature type="modified residue" description="Phosphoserine" evidence="15 17">
    <location>
        <position position="569"/>
    </location>
</feature>
<feature type="modified residue" description="Citrulline" evidence="1">
    <location>
        <position position="589"/>
    </location>
</feature>
<feature type="cross-link" description="Glycyl lysine isopeptide (Lys-Gly) (interchain with G-Cter in SUMO2)" evidence="20">
    <location>
        <position position="122"/>
    </location>
</feature>
<feature type="cross-link" description="Glycyl lysine isopeptide (Lys-Gly) (interchain with G-Cter in SUMO2)" evidence="20">
    <location>
        <position position="449"/>
    </location>
</feature>
<feature type="cross-link" description="Glycyl lysine isopeptide (Lys-Gly) (interchain with G-Cter in SUMO2)" evidence="20">
    <location>
        <position position="519"/>
    </location>
</feature>
<feature type="cross-link" description="Glycyl lysine isopeptide (Lys-Gly) (interchain with G-Cter in SUMO2)" evidence="19 20">
    <location>
        <position position="733"/>
    </location>
</feature>
<feature type="splice variant" id="VSP_014475" description="In isoform 2." evidence="10">
    <original>MTANRLAESLLA</original>
    <variation>MKGDFRKKKSEA</variation>
    <location>
        <begin position="1"/>
        <end position="12"/>
    </location>
</feature>
<feature type="splice variant" id="VSP_014476" description="In isoform 2." evidence="10">
    <location>
        <begin position="13"/>
        <end position="180"/>
    </location>
</feature>
<feature type="splice variant" id="VSP_046389" description="In isoform 3." evidence="9">
    <location>
        <begin position="128"/>
        <end position="179"/>
    </location>
</feature>
<feature type="sequence variant" id="VAR_078693" evidence="7">
    <location>
        <position position="120"/>
    </location>
</feature>
<feature type="sequence variant" id="VAR_022811" description="In dbSNP:rs2281278.">
    <original>V</original>
    <variation>A</variation>
    <location>
        <position position="487"/>
    </location>
</feature>
<feature type="sequence variant" id="VAR_069181" description="In dbSNP:rs1055032." evidence="5">
    <original>D</original>
    <variation>G</variation>
    <location>
        <position position="771"/>
    </location>
</feature>
<feature type="helix" evidence="21">
    <location>
        <begin position="221"/>
        <end position="246"/>
    </location>
</feature>
<feature type="helix" evidence="21">
    <location>
        <begin position="250"/>
        <end position="262"/>
    </location>
</feature>
<feature type="strand" evidence="21">
    <location>
        <begin position="629"/>
        <end position="633"/>
    </location>
</feature>
<accession>Q9BVJ6</accession>
<accession>A8K7A3</accession>
<accession>A8MVQ1</accession>
<accession>B4DQ08</accession>
<accession>E9PEL7</accession>
<accession>Q5JYF1</accession>
<proteinExistence type="evidence at protein level"/>
<name>UT14A_HUMAN</name>
<dbReference type="EMBL" id="AK291918">
    <property type="protein sequence ID" value="BAF84607.1"/>
    <property type="molecule type" value="mRNA"/>
</dbReference>
<dbReference type="EMBL" id="AK298578">
    <property type="protein sequence ID" value="BAG60770.1"/>
    <property type="molecule type" value="mRNA"/>
</dbReference>
<dbReference type="EMBL" id="AL034405">
    <property type="status" value="NOT_ANNOTATED_CDS"/>
    <property type="molecule type" value="Genomic_DNA"/>
</dbReference>
<dbReference type="EMBL" id="CH471107">
    <property type="protein sequence ID" value="EAX11820.1"/>
    <property type="molecule type" value="Genomic_DNA"/>
</dbReference>
<dbReference type="EMBL" id="BC001149">
    <property type="protein sequence ID" value="AAH01149.1"/>
    <property type="molecule type" value="mRNA"/>
</dbReference>
<dbReference type="EMBL" id="BC009649">
    <property type="protein sequence ID" value="AAH09649.1"/>
    <property type="molecule type" value="mRNA"/>
</dbReference>
<dbReference type="EMBL" id="BC014987">
    <property type="protein sequence ID" value="AAH14987.1"/>
    <property type="molecule type" value="mRNA"/>
</dbReference>
<dbReference type="CCDS" id="CCDS14615.1">
    <molecule id="Q9BVJ6-1"/>
</dbReference>
<dbReference type="CCDS" id="CCDS55489.1">
    <molecule id="Q9BVJ6-3"/>
</dbReference>
<dbReference type="RefSeq" id="NP_001159693.1">
    <molecule id="Q9BVJ6-3"/>
    <property type="nucleotide sequence ID" value="NM_001166221.2"/>
</dbReference>
<dbReference type="RefSeq" id="NP_006640.2">
    <molecule id="Q9BVJ6-1"/>
    <property type="nucleotide sequence ID" value="NM_006649.3"/>
</dbReference>
<dbReference type="PDB" id="7MQ8">
    <property type="method" value="EM"/>
    <property type="resolution" value="3.60 A"/>
    <property type="chains" value="SS=1-771"/>
</dbReference>
<dbReference type="PDB" id="7MQ9">
    <property type="method" value="EM"/>
    <property type="resolution" value="3.87 A"/>
    <property type="chains" value="SS=1-771"/>
</dbReference>
<dbReference type="PDB" id="7MQA">
    <property type="method" value="EM"/>
    <property type="resolution" value="2.70 A"/>
    <property type="chains" value="SS=1-771"/>
</dbReference>
<dbReference type="PDB" id="7WTS">
    <property type="method" value="EM"/>
    <property type="resolution" value="3.20 A"/>
    <property type="chains" value="5=1-771"/>
</dbReference>
<dbReference type="PDBsum" id="7MQ8"/>
<dbReference type="PDBsum" id="7MQ9"/>
<dbReference type="PDBsum" id="7MQA"/>
<dbReference type="PDBsum" id="7WTS"/>
<dbReference type="EMDB" id="EMD-23936"/>
<dbReference type="EMDB" id="EMD-23937"/>
<dbReference type="EMDB" id="EMD-23938"/>
<dbReference type="EMDB" id="EMD-32799"/>
<dbReference type="SMR" id="Q9BVJ6"/>
<dbReference type="BioGRID" id="116026">
    <property type="interactions" value="238"/>
</dbReference>
<dbReference type="ComplexPortal" id="CPX-2511">
    <property type="entry name" value="Small ribosomal subunit processome"/>
</dbReference>
<dbReference type="DIP" id="DIP-32505N"/>
<dbReference type="FunCoup" id="Q9BVJ6">
    <property type="interactions" value="3044"/>
</dbReference>
<dbReference type="IntAct" id="Q9BVJ6">
    <property type="interactions" value="135"/>
</dbReference>
<dbReference type="MINT" id="Q9BVJ6"/>
<dbReference type="STRING" id="9606.ENSP00000377944"/>
<dbReference type="GlyGen" id="Q9BVJ6">
    <property type="glycosylation" value="1 site, 1 O-linked glycan (1 site)"/>
</dbReference>
<dbReference type="iPTMnet" id="Q9BVJ6"/>
<dbReference type="PhosphoSitePlus" id="Q9BVJ6"/>
<dbReference type="SwissPalm" id="Q9BVJ6"/>
<dbReference type="BioMuta" id="UTP14A"/>
<dbReference type="DMDM" id="68566226"/>
<dbReference type="CPTAC" id="CPTAC-5932"/>
<dbReference type="CPTAC" id="CPTAC-5933"/>
<dbReference type="jPOST" id="Q9BVJ6"/>
<dbReference type="MassIVE" id="Q9BVJ6"/>
<dbReference type="PaxDb" id="9606-ENSP00000377944"/>
<dbReference type="PeptideAtlas" id="Q9BVJ6"/>
<dbReference type="ProteomicsDB" id="19917"/>
<dbReference type="ProteomicsDB" id="79210">
    <molecule id="Q9BVJ6-1"/>
</dbReference>
<dbReference type="ProteomicsDB" id="79211">
    <molecule id="Q9BVJ6-2"/>
</dbReference>
<dbReference type="Pumba" id="Q9BVJ6"/>
<dbReference type="Antibodypedia" id="30118">
    <property type="antibodies" value="161 antibodies from 27 providers"/>
</dbReference>
<dbReference type="CPTC" id="Q9BVJ6">
    <property type="antibodies" value="1 antibody"/>
</dbReference>
<dbReference type="DNASU" id="10813"/>
<dbReference type="Ensembl" id="ENST00000394422.8">
    <molecule id="Q9BVJ6-1"/>
    <property type="protein sequence ID" value="ENSP00000377944.3"/>
    <property type="gene ID" value="ENSG00000156697.13"/>
</dbReference>
<dbReference type="Ensembl" id="ENST00000425117.6">
    <molecule id="Q9BVJ6-3"/>
    <property type="protein sequence ID" value="ENSP00000388669.2"/>
    <property type="gene ID" value="ENSG00000156697.13"/>
</dbReference>
<dbReference type="GeneID" id="10813"/>
<dbReference type="KEGG" id="hsa:10813"/>
<dbReference type="MANE-Select" id="ENST00000394422.8">
    <property type="protein sequence ID" value="ENSP00000377944.3"/>
    <property type="RefSeq nucleotide sequence ID" value="NM_006649.4"/>
    <property type="RefSeq protein sequence ID" value="NP_006640.2"/>
</dbReference>
<dbReference type="UCSC" id="uc004euz.4">
    <molecule id="Q9BVJ6-1"/>
    <property type="organism name" value="human"/>
</dbReference>
<dbReference type="AGR" id="HGNC:10665"/>
<dbReference type="CTD" id="10813"/>
<dbReference type="DisGeNET" id="10813"/>
<dbReference type="GeneCards" id="UTP14A"/>
<dbReference type="HGNC" id="HGNC:10665">
    <property type="gene designation" value="UTP14A"/>
</dbReference>
<dbReference type="HPA" id="ENSG00000156697">
    <property type="expression patterns" value="Low tissue specificity"/>
</dbReference>
<dbReference type="MIM" id="300508">
    <property type="type" value="gene"/>
</dbReference>
<dbReference type="neXtProt" id="NX_Q9BVJ6"/>
<dbReference type="OpenTargets" id="ENSG00000156697"/>
<dbReference type="PharmGKB" id="PA35595"/>
<dbReference type="VEuPathDB" id="HostDB:ENSG00000156697"/>
<dbReference type="eggNOG" id="KOG2172">
    <property type="taxonomic scope" value="Eukaryota"/>
</dbReference>
<dbReference type="GeneTree" id="ENSGT00390000008142"/>
<dbReference type="HOGENOM" id="CLU_012635_1_0_1"/>
<dbReference type="InParanoid" id="Q9BVJ6"/>
<dbReference type="OMA" id="QVIEPMD"/>
<dbReference type="OrthoDB" id="277439at2759"/>
<dbReference type="PAN-GO" id="Q9BVJ6">
    <property type="GO annotations" value="2 GO annotations based on evolutionary models"/>
</dbReference>
<dbReference type="PhylomeDB" id="Q9BVJ6"/>
<dbReference type="TreeFam" id="TF314531"/>
<dbReference type="PathwayCommons" id="Q9BVJ6"/>
<dbReference type="Reactome" id="R-HSA-6790901">
    <property type="pathway name" value="rRNA modification in the nucleus and cytosol"/>
</dbReference>
<dbReference type="Reactome" id="R-HSA-6791226">
    <property type="pathway name" value="Major pathway of rRNA processing in the nucleolus and cytosol"/>
</dbReference>
<dbReference type="SignaLink" id="Q9BVJ6"/>
<dbReference type="BioGRID-ORCS" id="10813">
    <property type="hits" value="262 hits in 790 CRISPR screens"/>
</dbReference>
<dbReference type="CD-CODE" id="91857CE7">
    <property type="entry name" value="Nucleolus"/>
</dbReference>
<dbReference type="ChiTaRS" id="UTP14A">
    <property type="organism name" value="human"/>
</dbReference>
<dbReference type="GeneWiki" id="UTP14A"/>
<dbReference type="GenomeRNAi" id="10813"/>
<dbReference type="Pharos" id="Q9BVJ6">
    <property type="development level" value="Tbio"/>
</dbReference>
<dbReference type="PRO" id="PR:Q9BVJ6"/>
<dbReference type="Proteomes" id="UP000005640">
    <property type="component" value="Chromosome X"/>
</dbReference>
<dbReference type="RNAct" id="Q9BVJ6">
    <property type="molecule type" value="protein"/>
</dbReference>
<dbReference type="Bgee" id="ENSG00000156697">
    <property type="expression patterns" value="Expressed in oocyte and 189 other cell types or tissues"/>
</dbReference>
<dbReference type="ExpressionAtlas" id="Q9BVJ6">
    <property type="expression patterns" value="baseline and differential"/>
</dbReference>
<dbReference type="GO" id="GO:0005829">
    <property type="term" value="C:cytosol"/>
    <property type="evidence" value="ECO:0000314"/>
    <property type="project" value="HPA"/>
</dbReference>
<dbReference type="GO" id="GO:0005730">
    <property type="term" value="C:nucleolus"/>
    <property type="evidence" value="ECO:0000314"/>
    <property type="project" value="HPA"/>
</dbReference>
<dbReference type="GO" id="GO:0005654">
    <property type="term" value="C:nucleoplasm"/>
    <property type="evidence" value="ECO:0000304"/>
    <property type="project" value="Reactome"/>
</dbReference>
<dbReference type="GO" id="GO:0032040">
    <property type="term" value="C:small-subunit processome"/>
    <property type="evidence" value="ECO:0000318"/>
    <property type="project" value="GO_Central"/>
</dbReference>
<dbReference type="GO" id="GO:0003723">
    <property type="term" value="F:RNA binding"/>
    <property type="evidence" value="ECO:0007005"/>
    <property type="project" value="UniProtKB"/>
</dbReference>
<dbReference type="GO" id="GO:0006364">
    <property type="term" value="P:rRNA processing"/>
    <property type="evidence" value="ECO:0007669"/>
    <property type="project" value="InterPro"/>
</dbReference>
<dbReference type="InterPro" id="IPR006709">
    <property type="entry name" value="SSU_processome_Utp14"/>
</dbReference>
<dbReference type="PANTHER" id="PTHR14150">
    <property type="entry name" value="U3 SMALL NUCLEOLAR RNA-ASSOCIATED PROTEIN 14"/>
    <property type="match status" value="1"/>
</dbReference>
<dbReference type="PANTHER" id="PTHR14150:SF14">
    <property type="entry name" value="U3 SMALL NUCLEOLAR RNA-ASSOCIATED PROTEIN 14 HOMOLOG A"/>
    <property type="match status" value="1"/>
</dbReference>
<dbReference type="Pfam" id="PF04615">
    <property type="entry name" value="Utp14"/>
    <property type="match status" value="1"/>
</dbReference>
<sequence>MTANRLAESLLALSQQEELADLPKDYLLSESEDEGDNDGERKHQKLLEAISSLDGKNRRKLAERSEASLKVSEFNVSSEGSGEKLVLADLLEPVKTSSSLATVKKQLSRVKSKKTVELPLNKEEIERIHREVAFNKTAQVLSKWDPVVLKNRQAEQLVFPLEKEEPAIAPIEHVLSGWKARTPLEQEIFNLLHKNKQPVTDPLLTPVEKASLRAMSLEEAKMRRAELQRARALQSYYEAKARREKKIKSKKYHKVVKKGKAKKALKEFEQLRKVNPAAALEELEKIEKARMMERMSLKHQNSGKWAKSKAIMAKYDLEARQAMQEQLSKNKELTQKLQVASESEEEEGGTEDVEELLVPDVVNEVQMNADGPNPWMLRSCTSDTKEAATQEDPEQLPELEAHGVSESEGEERPVAEEEILLREFEERRSLRKRSELSQDAEPAGSQETKDSGSQEVLSELRVLSQKLKENHQSRKQKASSEGTIPQVQREEPAPEEEEPLLLQRPERVQTLEELEELGKEECFQNKELPRPVLEGQQSERTPNNRPDAPKEKKKKEQMIDLQNLLTTQSPSVKSLAVPTIEELEDEEERNHRQMIKEAFAGDDVIRDFLKEKREAVEASKPKDVDLTLPGWGEWGGVGLKPSAKKRRRFLIKAPEGPPRKDKNLPNVIINEKRNIHAAAHQVRVLPYPFTHHWQFERTIQTPIGSTWNTQRAFQKLTTPKVVTKPGHIINPIKAEDVGYRSSSRSDLSVIQRNPKRITTRHKKQLKKCSVD</sequence>
<evidence type="ECO:0000250" key="1"/>
<evidence type="ECO:0000255" key="2"/>
<evidence type="ECO:0000256" key="3">
    <source>
        <dbReference type="SAM" id="MobiDB-lite"/>
    </source>
</evidence>
<evidence type="ECO:0000269" key="4">
    <source>
    </source>
</evidence>
<evidence type="ECO:0000269" key="5">
    <source>
    </source>
</evidence>
<evidence type="ECO:0000269" key="6">
    <source>
    </source>
</evidence>
<evidence type="ECO:0000269" key="7">
    <source>
    </source>
</evidence>
<evidence type="ECO:0000269" key="8">
    <source>
    </source>
</evidence>
<evidence type="ECO:0000303" key="9">
    <source>
    </source>
</evidence>
<evidence type="ECO:0000305" key="10"/>
<evidence type="ECO:0007744" key="11">
    <source>
    </source>
</evidence>
<evidence type="ECO:0007744" key="12">
    <source>
    </source>
</evidence>
<evidence type="ECO:0007744" key="13">
    <source>
    </source>
</evidence>
<evidence type="ECO:0007744" key="14">
    <source>
    </source>
</evidence>
<evidence type="ECO:0007744" key="15">
    <source>
    </source>
</evidence>
<evidence type="ECO:0007744" key="16">
    <source>
    </source>
</evidence>
<evidence type="ECO:0007744" key="17">
    <source>
    </source>
</evidence>
<evidence type="ECO:0007744" key="18">
    <source>
    </source>
</evidence>
<evidence type="ECO:0007744" key="19">
    <source>
    </source>
</evidence>
<evidence type="ECO:0007744" key="20">
    <source>
    </source>
</evidence>
<evidence type="ECO:0007829" key="21">
    <source>
        <dbReference type="PDB" id="7WTS"/>
    </source>
</evidence>
<protein>
    <recommendedName>
        <fullName>U3 small nucleolar RNA-associated protein 14 homolog A</fullName>
    </recommendedName>
    <alternativeName>
        <fullName>Antigen NY-CO-16</fullName>
    </alternativeName>
    <alternativeName>
        <fullName>Serologically defined colon cancer antigen 16</fullName>
    </alternativeName>
</protein>
<gene>
    <name type="primary">UTP14A</name>
    <name type="synonym">SDCCAG16</name>
</gene>
<reference key="1">
    <citation type="journal article" date="2004" name="Nat. Genet.">
        <title>Complete sequencing and characterization of 21,243 full-length human cDNAs.</title>
        <authorList>
            <person name="Ota T."/>
            <person name="Suzuki Y."/>
            <person name="Nishikawa T."/>
            <person name="Otsuki T."/>
            <person name="Sugiyama T."/>
            <person name="Irie R."/>
            <person name="Wakamatsu A."/>
            <person name="Hayashi K."/>
            <person name="Sato H."/>
            <person name="Nagai K."/>
            <person name="Kimura K."/>
            <person name="Makita H."/>
            <person name="Sekine M."/>
            <person name="Obayashi M."/>
            <person name="Nishi T."/>
            <person name="Shibahara T."/>
            <person name="Tanaka T."/>
            <person name="Ishii S."/>
            <person name="Yamamoto J."/>
            <person name="Saito K."/>
            <person name="Kawai Y."/>
            <person name="Isono Y."/>
            <person name="Nakamura Y."/>
            <person name="Nagahari K."/>
            <person name="Murakami K."/>
            <person name="Yasuda T."/>
            <person name="Iwayanagi T."/>
            <person name="Wagatsuma M."/>
            <person name="Shiratori A."/>
            <person name="Sudo H."/>
            <person name="Hosoiri T."/>
            <person name="Kaku Y."/>
            <person name="Kodaira H."/>
            <person name="Kondo H."/>
            <person name="Sugawara M."/>
            <person name="Takahashi M."/>
            <person name="Kanda K."/>
            <person name="Yokoi T."/>
            <person name="Furuya T."/>
            <person name="Kikkawa E."/>
            <person name="Omura Y."/>
            <person name="Abe K."/>
            <person name="Kamihara K."/>
            <person name="Katsuta N."/>
            <person name="Sato K."/>
            <person name="Tanikawa M."/>
            <person name="Yamazaki M."/>
            <person name="Ninomiya K."/>
            <person name="Ishibashi T."/>
            <person name="Yamashita H."/>
            <person name="Murakawa K."/>
            <person name="Fujimori K."/>
            <person name="Tanai H."/>
            <person name="Kimata M."/>
            <person name="Watanabe M."/>
            <person name="Hiraoka S."/>
            <person name="Chiba Y."/>
            <person name="Ishida S."/>
            <person name="Ono Y."/>
            <person name="Takiguchi S."/>
            <person name="Watanabe S."/>
            <person name="Yosida M."/>
            <person name="Hotuta T."/>
            <person name="Kusano J."/>
            <person name="Kanehori K."/>
            <person name="Takahashi-Fujii A."/>
            <person name="Hara H."/>
            <person name="Tanase T.-O."/>
            <person name="Nomura Y."/>
            <person name="Togiya S."/>
            <person name="Komai F."/>
            <person name="Hara R."/>
            <person name="Takeuchi K."/>
            <person name="Arita M."/>
            <person name="Imose N."/>
            <person name="Musashino K."/>
            <person name="Yuuki H."/>
            <person name="Oshima A."/>
            <person name="Sasaki N."/>
            <person name="Aotsuka S."/>
            <person name="Yoshikawa Y."/>
            <person name="Matsunawa H."/>
            <person name="Ichihara T."/>
            <person name="Shiohata N."/>
            <person name="Sano S."/>
            <person name="Moriya S."/>
            <person name="Momiyama H."/>
            <person name="Satoh N."/>
            <person name="Takami S."/>
            <person name="Terashima Y."/>
            <person name="Suzuki O."/>
            <person name="Nakagawa S."/>
            <person name="Senoh A."/>
            <person name="Mizoguchi H."/>
            <person name="Goto Y."/>
            <person name="Shimizu F."/>
            <person name="Wakebe H."/>
            <person name="Hishigaki H."/>
            <person name="Watanabe T."/>
            <person name="Sugiyama A."/>
            <person name="Takemoto M."/>
            <person name="Kawakami B."/>
            <person name="Yamazaki M."/>
            <person name="Watanabe K."/>
            <person name="Kumagai A."/>
            <person name="Itakura S."/>
            <person name="Fukuzumi Y."/>
            <person name="Fujimori Y."/>
            <person name="Komiyama M."/>
            <person name="Tashiro H."/>
            <person name="Tanigami A."/>
            <person name="Fujiwara T."/>
            <person name="Ono T."/>
            <person name="Yamada K."/>
            <person name="Fujii Y."/>
            <person name="Ozaki K."/>
            <person name="Hirao M."/>
            <person name="Ohmori Y."/>
            <person name="Kawabata A."/>
            <person name="Hikiji T."/>
            <person name="Kobatake N."/>
            <person name="Inagaki H."/>
            <person name="Ikema Y."/>
            <person name="Okamoto S."/>
            <person name="Okitani R."/>
            <person name="Kawakami T."/>
            <person name="Noguchi S."/>
            <person name="Itoh T."/>
            <person name="Shigeta K."/>
            <person name="Senba T."/>
            <person name="Matsumura K."/>
            <person name="Nakajima Y."/>
            <person name="Mizuno T."/>
            <person name="Morinaga M."/>
            <person name="Sasaki M."/>
            <person name="Togashi T."/>
            <person name="Oyama M."/>
            <person name="Hata H."/>
            <person name="Watanabe M."/>
            <person name="Komatsu T."/>
            <person name="Mizushima-Sugano J."/>
            <person name="Satoh T."/>
            <person name="Shirai Y."/>
            <person name="Takahashi Y."/>
            <person name="Nakagawa K."/>
            <person name="Okumura K."/>
            <person name="Nagase T."/>
            <person name="Nomura N."/>
            <person name="Kikuchi H."/>
            <person name="Masuho Y."/>
            <person name="Yamashita R."/>
            <person name="Nakai K."/>
            <person name="Yada T."/>
            <person name="Nakamura Y."/>
            <person name="Ohara O."/>
            <person name="Isogai T."/>
            <person name="Sugano S."/>
        </authorList>
    </citation>
    <scope>NUCLEOTIDE SEQUENCE [LARGE SCALE MRNA] (ISOFORMS 1 AND 3)</scope>
    <scope>VARIANT GLY-771</scope>
</reference>
<reference key="2">
    <citation type="journal article" date="2005" name="Nature">
        <title>The DNA sequence of the human X chromosome.</title>
        <authorList>
            <person name="Ross M.T."/>
            <person name="Grafham D.V."/>
            <person name="Coffey A.J."/>
            <person name="Scherer S."/>
            <person name="McLay K."/>
            <person name="Muzny D."/>
            <person name="Platzer M."/>
            <person name="Howell G.R."/>
            <person name="Burrows C."/>
            <person name="Bird C.P."/>
            <person name="Frankish A."/>
            <person name="Lovell F.L."/>
            <person name="Howe K.L."/>
            <person name="Ashurst J.L."/>
            <person name="Fulton R.S."/>
            <person name="Sudbrak R."/>
            <person name="Wen G."/>
            <person name="Jones M.C."/>
            <person name="Hurles M.E."/>
            <person name="Andrews T.D."/>
            <person name="Scott C.E."/>
            <person name="Searle S."/>
            <person name="Ramser J."/>
            <person name="Whittaker A."/>
            <person name="Deadman R."/>
            <person name="Carter N.P."/>
            <person name="Hunt S.E."/>
            <person name="Chen R."/>
            <person name="Cree A."/>
            <person name="Gunaratne P."/>
            <person name="Havlak P."/>
            <person name="Hodgson A."/>
            <person name="Metzker M.L."/>
            <person name="Richards S."/>
            <person name="Scott G."/>
            <person name="Steffen D."/>
            <person name="Sodergren E."/>
            <person name="Wheeler D.A."/>
            <person name="Worley K.C."/>
            <person name="Ainscough R."/>
            <person name="Ambrose K.D."/>
            <person name="Ansari-Lari M.A."/>
            <person name="Aradhya S."/>
            <person name="Ashwell R.I."/>
            <person name="Babbage A.K."/>
            <person name="Bagguley C.L."/>
            <person name="Ballabio A."/>
            <person name="Banerjee R."/>
            <person name="Barker G.E."/>
            <person name="Barlow K.F."/>
            <person name="Barrett I.P."/>
            <person name="Bates K.N."/>
            <person name="Beare D.M."/>
            <person name="Beasley H."/>
            <person name="Beasley O."/>
            <person name="Beck A."/>
            <person name="Bethel G."/>
            <person name="Blechschmidt K."/>
            <person name="Brady N."/>
            <person name="Bray-Allen S."/>
            <person name="Bridgeman A.M."/>
            <person name="Brown A.J."/>
            <person name="Brown M.J."/>
            <person name="Bonnin D."/>
            <person name="Bruford E.A."/>
            <person name="Buhay C."/>
            <person name="Burch P."/>
            <person name="Burford D."/>
            <person name="Burgess J."/>
            <person name="Burrill W."/>
            <person name="Burton J."/>
            <person name="Bye J.M."/>
            <person name="Carder C."/>
            <person name="Carrel L."/>
            <person name="Chako J."/>
            <person name="Chapman J.C."/>
            <person name="Chavez D."/>
            <person name="Chen E."/>
            <person name="Chen G."/>
            <person name="Chen Y."/>
            <person name="Chen Z."/>
            <person name="Chinault C."/>
            <person name="Ciccodicola A."/>
            <person name="Clark S.Y."/>
            <person name="Clarke G."/>
            <person name="Clee C.M."/>
            <person name="Clegg S."/>
            <person name="Clerc-Blankenburg K."/>
            <person name="Clifford K."/>
            <person name="Cobley V."/>
            <person name="Cole C.G."/>
            <person name="Conquer J.S."/>
            <person name="Corby N."/>
            <person name="Connor R.E."/>
            <person name="David R."/>
            <person name="Davies J."/>
            <person name="Davis C."/>
            <person name="Davis J."/>
            <person name="Delgado O."/>
            <person name="Deshazo D."/>
            <person name="Dhami P."/>
            <person name="Ding Y."/>
            <person name="Dinh H."/>
            <person name="Dodsworth S."/>
            <person name="Draper H."/>
            <person name="Dugan-Rocha S."/>
            <person name="Dunham A."/>
            <person name="Dunn M."/>
            <person name="Durbin K.J."/>
            <person name="Dutta I."/>
            <person name="Eades T."/>
            <person name="Ellwood M."/>
            <person name="Emery-Cohen A."/>
            <person name="Errington H."/>
            <person name="Evans K.L."/>
            <person name="Faulkner L."/>
            <person name="Francis F."/>
            <person name="Frankland J."/>
            <person name="Fraser A.E."/>
            <person name="Galgoczy P."/>
            <person name="Gilbert J."/>
            <person name="Gill R."/>
            <person name="Gloeckner G."/>
            <person name="Gregory S.G."/>
            <person name="Gribble S."/>
            <person name="Griffiths C."/>
            <person name="Grocock R."/>
            <person name="Gu Y."/>
            <person name="Gwilliam R."/>
            <person name="Hamilton C."/>
            <person name="Hart E.A."/>
            <person name="Hawes A."/>
            <person name="Heath P.D."/>
            <person name="Heitmann K."/>
            <person name="Hennig S."/>
            <person name="Hernandez J."/>
            <person name="Hinzmann B."/>
            <person name="Ho S."/>
            <person name="Hoffs M."/>
            <person name="Howden P.J."/>
            <person name="Huckle E.J."/>
            <person name="Hume J."/>
            <person name="Hunt P.J."/>
            <person name="Hunt A.R."/>
            <person name="Isherwood J."/>
            <person name="Jacob L."/>
            <person name="Johnson D."/>
            <person name="Jones S."/>
            <person name="de Jong P.J."/>
            <person name="Joseph S.S."/>
            <person name="Keenan S."/>
            <person name="Kelly S."/>
            <person name="Kershaw J.K."/>
            <person name="Khan Z."/>
            <person name="Kioschis P."/>
            <person name="Klages S."/>
            <person name="Knights A.J."/>
            <person name="Kosiura A."/>
            <person name="Kovar-Smith C."/>
            <person name="Laird G.K."/>
            <person name="Langford C."/>
            <person name="Lawlor S."/>
            <person name="Leversha M."/>
            <person name="Lewis L."/>
            <person name="Liu W."/>
            <person name="Lloyd C."/>
            <person name="Lloyd D.M."/>
            <person name="Loulseged H."/>
            <person name="Loveland J.E."/>
            <person name="Lovell J.D."/>
            <person name="Lozado R."/>
            <person name="Lu J."/>
            <person name="Lyne R."/>
            <person name="Ma J."/>
            <person name="Maheshwari M."/>
            <person name="Matthews L.H."/>
            <person name="McDowall J."/>
            <person name="McLaren S."/>
            <person name="McMurray A."/>
            <person name="Meidl P."/>
            <person name="Meitinger T."/>
            <person name="Milne S."/>
            <person name="Miner G."/>
            <person name="Mistry S.L."/>
            <person name="Morgan M."/>
            <person name="Morris S."/>
            <person name="Mueller I."/>
            <person name="Mullikin J.C."/>
            <person name="Nguyen N."/>
            <person name="Nordsiek G."/>
            <person name="Nyakatura G."/>
            <person name="O'dell C.N."/>
            <person name="Okwuonu G."/>
            <person name="Palmer S."/>
            <person name="Pandian R."/>
            <person name="Parker D."/>
            <person name="Parrish J."/>
            <person name="Pasternak S."/>
            <person name="Patel D."/>
            <person name="Pearce A.V."/>
            <person name="Pearson D.M."/>
            <person name="Pelan S.E."/>
            <person name="Perez L."/>
            <person name="Porter K.M."/>
            <person name="Ramsey Y."/>
            <person name="Reichwald K."/>
            <person name="Rhodes S."/>
            <person name="Ridler K.A."/>
            <person name="Schlessinger D."/>
            <person name="Schueler M.G."/>
            <person name="Sehra H.K."/>
            <person name="Shaw-Smith C."/>
            <person name="Shen H."/>
            <person name="Sheridan E.M."/>
            <person name="Shownkeen R."/>
            <person name="Skuce C.D."/>
            <person name="Smith M.L."/>
            <person name="Sotheran E.C."/>
            <person name="Steingruber H.E."/>
            <person name="Steward C.A."/>
            <person name="Storey R."/>
            <person name="Swann R.M."/>
            <person name="Swarbreck D."/>
            <person name="Tabor P.E."/>
            <person name="Taudien S."/>
            <person name="Taylor T."/>
            <person name="Teague B."/>
            <person name="Thomas K."/>
            <person name="Thorpe A."/>
            <person name="Timms K."/>
            <person name="Tracey A."/>
            <person name="Trevanion S."/>
            <person name="Tromans A.C."/>
            <person name="d'Urso M."/>
            <person name="Verduzco D."/>
            <person name="Villasana D."/>
            <person name="Waldron L."/>
            <person name="Wall M."/>
            <person name="Wang Q."/>
            <person name="Warren J."/>
            <person name="Warry G.L."/>
            <person name="Wei X."/>
            <person name="West A."/>
            <person name="Whitehead S.L."/>
            <person name="Whiteley M.N."/>
            <person name="Wilkinson J.E."/>
            <person name="Willey D.L."/>
            <person name="Williams G."/>
            <person name="Williams L."/>
            <person name="Williamson A."/>
            <person name="Williamson H."/>
            <person name="Wilming L."/>
            <person name="Woodmansey R.L."/>
            <person name="Wray P.W."/>
            <person name="Yen J."/>
            <person name="Zhang J."/>
            <person name="Zhou J."/>
            <person name="Zoghbi H."/>
            <person name="Zorilla S."/>
            <person name="Buck D."/>
            <person name="Reinhardt R."/>
            <person name="Poustka A."/>
            <person name="Rosenthal A."/>
            <person name="Lehrach H."/>
            <person name="Meindl A."/>
            <person name="Minx P.J."/>
            <person name="Hillier L.W."/>
            <person name="Willard H.F."/>
            <person name="Wilson R.K."/>
            <person name="Waterston R.H."/>
            <person name="Rice C.M."/>
            <person name="Vaudin M."/>
            <person name="Coulson A."/>
            <person name="Nelson D.L."/>
            <person name="Weinstock G."/>
            <person name="Sulston J.E."/>
            <person name="Durbin R.M."/>
            <person name="Hubbard T."/>
            <person name="Gibbs R.A."/>
            <person name="Beck S."/>
            <person name="Rogers J."/>
            <person name="Bentley D.R."/>
        </authorList>
    </citation>
    <scope>NUCLEOTIDE SEQUENCE [LARGE SCALE GENOMIC DNA] (ISOFORM 2)</scope>
</reference>
<reference key="3">
    <citation type="submission" date="2005-09" db="EMBL/GenBank/DDBJ databases">
        <authorList>
            <person name="Mural R.J."/>
            <person name="Istrail S."/>
            <person name="Sutton G.G."/>
            <person name="Florea L."/>
            <person name="Halpern A.L."/>
            <person name="Mobarry C.M."/>
            <person name="Lippert R."/>
            <person name="Walenz B."/>
            <person name="Shatkay H."/>
            <person name="Dew I."/>
            <person name="Miller J.R."/>
            <person name="Flanigan M.J."/>
            <person name="Edwards N.J."/>
            <person name="Bolanos R."/>
            <person name="Fasulo D."/>
            <person name="Halldorsson B.V."/>
            <person name="Hannenhalli S."/>
            <person name="Turner R."/>
            <person name="Yooseph S."/>
            <person name="Lu F."/>
            <person name="Nusskern D.R."/>
            <person name="Shue B.C."/>
            <person name="Zheng X.H."/>
            <person name="Zhong F."/>
            <person name="Delcher A.L."/>
            <person name="Huson D.H."/>
            <person name="Kravitz S.A."/>
            <person name="Mouchard L."/>
            <person name="Reinert K."/>
            <person name="Remington K.A."/>
            <person name="Clark A.G."/>
            <person name="Waterman M.S."/>
            <person name="Eichler E.E."/>
            <person name="Adams M.D."/>
            <person name="Hunkapiller M.W."/>
            <person name="Myers E.W."/>
            <person name="Venter J.C."/>
        </authorList>
    </citation>
    <scope>NUCLEOTIDE SEQUENCE [LARGE SCALE GENOMIC DNA]</scope>
</reference>
<reference key="4">
    <citation type="journal article" date="2004" name="Genome Res.">
        <title>The status, quality, and expansion of the NIH full-length cDNA project: the Mammalian Gene Collection (MGC).</title>
        <authorList>
            <consortium name="The MGC Project Team"/>
        </authorList>
    </citation>
    <scope>NUCLEOTIDE SEQUENCE [LARGE SCALE MRNA] (ISOFORM 1)</scope>
    <source>
        <tissue>Cervix</tissue>
        <tissue>Eye</tissue>
        <tissue>Muscle</tissue>
    </source>
</reference>
<reference key="5">
    <citation type="journal article" date="2002" name="Mol. Biol. Cell">
        <title>Functional proteomic analysis of human nucleolus.</title>
        <authorList>
            <person name="Scherl A."/>
            <person name="Coute Y."/>
            <person name="Deon C."/>
            <person name="Calle A."/>
            <person name="Kindbeiter K."/>
            <person name="Sanchez J.-C."/>
            <person name="Greco A."/>
            <person name="Hochstrasser D.F."/>
            <person name="Diaz J.-J."/>
        </authorList>
    </citation>
    <scope>SUBCELLULAR LOCATION [LARGE SCALE ANALYSIS]</scope>
    <source>
        <tissue>Cervix carcinoma</tissue>
    </source>
</reference>
<reference key="6">
    <citation type="journal article" date="2004" name="Proc. Natl. Acad. Sci. U.S.A.">
        <title>The mouse juvenile spermatogonial depletion (jsd) phenotype is due to a mutation in the X-derived retrogene, mUtp14b.</title>
        <authorList>
            <person name="Rohozinski J."/>
            <person name="Bishop C.E."/>
        </authorList>
    </citation>
    <scope>TISSUE SPECIFICITY</scope>
</reference>
<reference key="7">
    <citation type="journal article" date="2006" name="Cell">
        <title>Global, in vivo, and site-specific phosphorylation dynamics in signaling networks.</title>
        <authorList>
            <person name="Olsen J.V."/>
            <person name="Blagoev B."/>
            <person name="Gnad F."/>
            <person name="Macek B."/>
            <person name="Kumar C."/>
            <person name="Mortensen P."/>
            <person name="Mann M."/>
        </authorList>
    </citation>
    <scope>PHOSPHORYLATION [LARGE SCALE ANALYSIS] AT SER-445</scope>
    <scope>IDENTIFICATION BY MASS SPECTROMETRY [LARGE SCALE ANALYSIS]</scope>
    <source>
        <tissue>Cervix carcinoma</tissue>
    </source>
</reference>
<reference key="8">
    <citation type="journal article" date="2006" name="Nat. Biotechnol.">
        <title>A probability-based approach for high-throughput protein phosphorylation analysis and site localization.</title>
        <authorList>
            <person name="Beausoleil S.A."/>
            <person name="Villen J."/>
            <person name="Gerber S.A."/>
            <person name="Rush J."/>
            <person name="Gygi S.P."/>
        </authorList>
    </citation>
    <scope>IDENTIFICATION BY MASS SPECTROMETRY [LARGE SCALE ANALYSIS]</scope>
    <source>
        <tissue>Cervix carcinoma</tissue>
    </source>
</reference>
<reference key="9">
    <citation type="journal article" date="2007" name="Science">
        <title>ATM and ATR substrate analysis reveals extensive protein networks responsive to DNA damage.</title>
        <authorList>
            <person name="Matsuoka S."/>
            <person name="Ballif B.A."/>
            <person name="Smogorzewska A."/>
            <person name="McDonald E.R. III"/>
            <person name="Hurov K.E."/>
            <person name="Luo J."/>
            <person name="Bakalarski C.E."/>
            <person name="Zhao Z."/>
            <person name="Solimini N."/>
            <person name="Lerenthal Y."/>
            <person name="Shiloh Y."/>
            <person name="Gygi S.P."/>
            <person name="Elledge S.J."/>
        </authorList>
    </citation>
    <scope>PHOSPHORYLATION [LARGE SCALE ANALYSIS] AT SER-437</scope>
    <scope>IDENTIFICATION BY MASS SPECTROMETRY [LARGE SCALE ANALYSIS]</scope>
    <source>
        <tissue>Embryonic kidney</tissue>
    </source>
</reference>
<reference key="10">
    <citation type="journal article" date="2008" name="Proc. Natl. Acad. Sci. U.S.A.">
        <title>A quantitative atlas of mitotic phosphorylation.</title>
        <authorList>
            <person name="Dephoure N."/>
            <person name="Zhou C."/>
            <person name="Villen J."/>
            <person name="Beausoleil S.A."/>
            <person name="Bakalarski C.E."/>
            <person name="Elledge S.J."/>
            <person name="Gygi S.P."/>
        </authorList>
    </citation>
    <scope>PHOSPHORYLATION [LARGE SCALE ANALYSIS] AT SER-29; SER-31; SER-52; SER-77; SER-405; SER-407 AND SER-445</scope>
    <scope>IDENTIFICATION BY MASS SPECTROMETRY [LARGE SCALE ANALYSIS]</scope>
    <source>
        <tissue>Cervix carcinoma</tissue>
    </source>
</reference>
<reference key="11">
    <citation type="journal article" date="2009" name="Anal. Chem.">
        <title>Lys-N and trypsin cover complementary parts of the phosphoproteome in a refined SCX-based approach.</title>
        <authorList>
            <person name="Gauci S."/>
            <person name="Helbig A.O."/>
            <person name="Slijper M."/>
            <person name="Krijgsveld J."/>
            <person name="Heck A.J."/>
            <person name="Mohammed S."/>
        </authorList>
    </citation>
    <scope>IDENTIFICATION BY MASS SPECTROMETRY [LARGE SCALE ANALYSIS]</scope>
</reference>
<reference key="12">
    <citation type="journal article" date="2009" name="Sci. Signal.">
        <title>Quantitative phosphoproteomic analysis of T cell receptor signaling reveals system-wide modulation of protein-protein interactions.</title>
        <authorList>
            <person name="Mayya V."/>
            <person name="Lundgren D.H."/>
            <person name="Hwang S.-I."/>
            <person name="Rezaul K."/>
            <person name="Wu L."/>
            <person name="Eng J.K."/>
            <person name="Rodionov V."/>
            <person name="Han D.K."/>
        </authorList>
    </citation>
    <scope>PHOSPHORYLATION [LARGE SCALE ANALYSIS] AT SER-29; SER-31 AND SER-437</scope>
    <scope>IDENTIFICATION BY MASS SPECTROMETRY [LARGE SCALE ANALYSIS]</scope>
    <source>
        <tissue>Leukemic T-cell</tissue>
    </source>
</reference>
<reference key="13">
    <citation type="journal article" date="2010" name="Sci. Signal.">
        <title>Quantitative phosphoproteomics reveals widespread full phosphorylation site occupancy during mitosis.</title>
        <authorList>
            <person name="Olsen J.V."/>
            <person name="Vermeulen M."/>
            <person name="Santamaria A."/>
            <person name="Kumar C."/>
            <person name="Miller M.L."/>
            <person name="Jensen L.J."/>
            <person name="Gnad F."/>
            <person name="Cox J."/>
            <person name="Jensen T.S."/>
            <person name="Nigg E.A."/>
            <person name="Brunak S."/>
            <person name="Mann M."/>
        </authorList>
    </citation>
    <scope>PHOSPHORYLATION [LARGE SCALE ANALYSIS] AT SER-52; THR-205; SER-445; SER-453 AND SER-569</scope>
    <scope>IDENTIFICATION BY MASS SPECTROMETRY [LARGE SCALE ANALYSIS]</scope>
    <source>
        <tissue>Cervix carcinoma</tissue>
    </source>
</reference>
<reference key="14">
    <citation type="journal article" date="2011" name="Sci. Signal.">
        <title>System-wide temporal characterization of the proteome and phosphoproteome of human embryonic stem cell differentiation.</title>
        <authorList>
            <person name="Rigbolt K.T."/>
            <person name="Prokhorova T.A."/>
            <person name="Akimov V."/>
            <person name="Henningsen J."/>
            <person name="Johansen P.T."/>
            <person name="Kratchmarova I."/>
            <person name="Kassem M."/>
            <person name="Mann M."/>
            <person name="Olsen J.V."/>
            <person name="Blagoev B."/>
        </authorList>
    </citation>
    <scope>PHOSPHORYLATION [LARGE SCALE ANALYSIS] AT SER-405; SER-407; SER-437; SER-445 AND SER-453</scope>
    <scope>IDENTIFICATION BY MASS SPECTROMETRY [LARGE SCALE ANALYSIS]</scope>
</reference>
<reference key="15">
    <citation type="journal article" date="2013" name="J. Proteome Res.">
        <title>Toward a comprehensive characterization of a human cancer cell phosphoproteome.</title>
        <authorList>
            <person name="Zhou H."/>
            <person name="Di Palma S."/>
            <person name="Preisinger C."/>
            <person name="Peng M."/>
            <person name="Polat A.N."/>
            <person name="Heck A.J."/>
            <person name="Mohammed S."/>
        </authorList>
    </citation>
    <scope>PHOSPHORYLATION [LARGE SCALE ANALYSIS] AT SER-29; SER-31; SER-52; SER-77; SER-81; SER-437; SER-445; SER-453 AND SER-569</scope>
    <scope>IDENTIFICATION BY MASS SPECTROMETRY [LARGE SCALE ANALYSIS]</scope>
    <source>
        <tissue>Cervix carcinoma</tissue>
        <tissue>Erythroleukemia</tissue>
    </source>
</reference>
<reference key="16">
    <citation type="journal article" date="2014" name="J. Proteomics">
        <title>An enzyme assisted RP-RPLC approach for in-depth analysis of human liver phosphoproteome.</title>
        <authorList>
            <person name="Bian Y."/>
            <person name="Song C."/>
            <person name="Cheng K."/>
            <person name="Dong M."/>
            <person name="Wang F."/>
            <person name="Huang J."/>
            <person name="Sun D."/>
            <person name="Wang L."/>
            <person name="Ye M."/>
            <person name="Zou H."/>
        </authorList>
    </citation>
    <scope>PHOSPHORYLATION [LARGE SCALE ANALYSIS] AT SER-29 AND SER-31</scope>
    <scope>IDENTIFICATION BY MASS SPECTROMETRY [LARGE SCALE ANALYSIS]</scope>
    <source>
        <tissue>Liver</tissue>
    </source>
</reference>
<reference key="17">
    <citation type="journal article" date="2014" name="Nat. Struct. Mol. Biol.">
        <title>Uncovering global SUMOylation signaling networks in a site-specific manner.</title>
        <authorList>
            <person name="Hendriks I.A."/>
            <person name="D'Souza R.C."/>
            <person name="Yang B."/>
            <person name="Verlaan-de Vries M."/>
            <person name="Mann M."/>
            <person name="Vertegaal A.C."/>
        </authorList>
    </citation>
    <scope>SUMOYLATION [LARGE SCALE ANALYSIS] AT LYS-733</scope>
    <scope>IDENTIFICATION BY MASS SPECTROMETRY [LARGE SCALE ANALYSIS]</scope>
</reference>
<reference key="18">
    <citation type="journal article" date="2017" name="Nat. Struct. Mol. Biol.">
        <title>Site-specific mapping of the human SUMO proteome reveals co-modification with phosphorylation.</title>
        <authorList>
            <person name="Hendriks I.A."/>
            <person name="Lyon D."/>
            <person name="Young C."/>
            <person name="Jensen L.J."/>
            <person name="Vertegaal A.C."/>
            <person name="Nielsen M.L."/>
        </authorList>
    </citation>
    <scope>SUMOYLATION [LARGE SCALE ANALYSIS] AT LYS-122; LYS-449; LYS-519 AND LYS-733</scope>
    <scope>IDENTIFICATION BY MASS SPECTROMETRY [LARGE SCALE ANALYSIS]</scope>
</reference>
<reference key="19">
    <citation type="journal article" date="2019" name="RNA Biol.">
        <title>The human RNA helicase DHX37 is required for release of the U3 snoRNP from pre-ribosomal particles.</title>
        <authorList>
            <person name="Choudhury P."/>
            <person name="Hackert P."/>
            <person name="Memet I."/>
            <person name="Sloan K.E."/>
            <person name="Bohnsack M.T."/>
        </authorList>
    </citation>
    <scope>INTERACTION WITH DHX37</scope>
</reference>
<reference key="20">
    <citation type="journal article" date="2012" name="N. Engl. J. Med.">
        <title>Diagnostic exome sequencing in persons with severe intellectual disability.</title>
        <authorList>
            <person name="de Ligt J."/>
            <person name="Willemsen M.H."/>
            <person name="van Bon B.W."/>
            <person name="Kleefstra T."/>
            <person name="Yntema H.G."/>
            <person name="Kroes T."/>
            <person name="Vulto-van Silfhout A.T."/>
            <person name="Koolen D.A."/>
            <person name="de Vries P."/>
            <person name="Gilissen C."/>
            <person name="del Rosario M."/>
            <person name="Hoischen A."/>
            <person name="Scheffer H."/>
            <person name="de Vries B.B."/>
            <person name="Brunner H.G."/>
            <person name="Veltman J.A."/>
            <person name="Vissers L.E."/>
        </authorList>
    </citation>
    <scope>VARIANT LEU-120 DEL</scope>
</reference>